<evidence type="ECO:0000250" key="1"/>
<evidence type="ECO:0000255" key="2">
    <source>
        <dbReference type="PROSITE-ProRule" id="PRU00159"/>
    </source>
</evidence>
<evidence type="ECO:0000255" key="3">
    <source>
        <dbReference type="PROSITE-ProRule" id="PRU10027"/>
    </source>
</evidence>
<evidence type="ECO:0000269" key="4">
    <source>
    </source>
</evidence>
<evidence type="ECO:0000269" key="5">
    <source>
    </source>
</evidence>
<evidence type="ECO:0000269" key="6">
    <source ref="3"/>
</evidence>
<evidence type="ECO:0000303" key="7">
    <source ref="3"/>
</evidence>
<evidence type="ECO:0000305" key="8"/>
<evidence type="ECO:0000312" key="9">
    <source>
        <dbReference type="EMBL" id="EEE51411.1"/>
    </source>
</evidence>
<accession>P0C5D6</accession>
<accession>A0A0P0XXL3</accession>
<accession>B9G714</accession>
<accession>F6M7C7</accession>
<accession>O04062</accession>
<accession>O24189</accession>
<accession>Q0IVL6</accession>
<accession>Q75V63</accession>
<accession>Q7XC29</accession>
<accession>Q9AY41</accession>
<gene>
    <name type="primary">SAPK3</name>
    <name type="synonym">REK</name>
    <name type="ordered locus">Os10g0564500</name>
    <name type="ordered locus">LOC_Os10g41490</name>
    <name evidence="9" type="ORF">OsJ_32488</name>
    <name type="ORF">OSJNBa0027P10.6</name>
</gene>
<proteinExistence type="evidence at protein level"/>
<comment type="function">
    <text>May play a role in signal transduction of hyperosmotic response.</text>
</comment>
<comment type="catalytic activity">
    <reaction>
        <text>L-seryl-[protein] + ATP = O-phospho-L-seryl-[protein] + ADP + H(+)</text>
        <dbReference type="Rhea" id="RHEA:17989"/>
        <dbReference type="Rhea" id="RHEA-COMP:9863"/>
        <dbReference type="Rhea" id="RHEA-COMP:11604"/>
        <dbReference type="ChEBI" id="CHEBI:15378"/>
        <dbReference type="ChEBI" id="CHEBI:29999"/>
        <dbReference type="ChEBI" id="CHEBI:30616"/>
        <dbReference type="ChEBI" id="CHEBI:83421"/>
        <dbReference type="ChEBI" id="CHEBI:456216"/>
        <dbReference type="EC" id="2.7.11.1"/>
    </reaction>
</comment>
<comment type="catalytic activity">
    <reaction>
        <text>L-threonyl-[protein] + ATP = O-phospho-L-threonyl-[protein] + ADP + H(+)</text>
        <dbReference type="Rhea" id="RHEA:46608"/>
        <dbReference type="Rhea" id="RHEA-COMP:11060"/>
        <dbReference type="Rhea" id="RHEA-COMP:11605"/>
        <dbReference type="ChEBI" id="CHEBI:15378"/>
        <dbReference type="ChEBI" id="CHEBI:30013"/>
        <dbReference type="ChEBI" id="CHEBI:30616"/>
        <dbReference type="ChEBI" id="CHEBI:61977"/>
        <dbReference type="ChEBI" id="CHEBI:456216"/>
        <dbReference type="EC" id="2.7.11.1"/>
    </reaction>
</comment>
<comment type="activity regulation">
    <text evidence="1">Activated by phosphorylation (By similarity). Activated by hyperosmotic stress.</text>
</comment>
<comment type="subcellular location">
    <subcellularLocation>
        <location evidence="6">Cytoplasm</location>
    </subcellularLocation>
    <subcellularLocation>
        <location evidence="6">Nucleus</location>
    </subcellularLocation>
</comment>
<comment type="tissue specificity">
    <text evidence="4 5">Expressed in leaf blades, leaf sheaths and roots of plants grown hydroponically. Expressed in shoots and roots of young seedlings. Expressed in leaves and maturing seeds, but not in roots and stems of field-grown plants.</text>
</comment>
<comment type="induction">
    <text evidence="4 6">By abscisic acid (ABA) in leaf blades and leaf sheaths (PubMed:15084714). Induced during incompatible interaction with the bacterial pathogen Xanthomonas oryzae pv. oryzicola (Ref.3).</text>
</comment>
<comment type="PTM">
    <text>Autophosphorylated in presence of Ca(2+).</text>
</comment>
<comment type="similarity">
    <text evidence="2">Belongs to the protein kinase superfamily. Ser/Thr protein kinase family.</text>
</comment>
<comment type="sequence caution" evidence="8">
    <conflict type="erroneous gene model prediction">
        <sequence resource="EMBL-CDS" id="BAF27249"/>
    </conflict>
</comment>
<comment type="sequence caution" evidence="8">
    <conflict type="erroneous gene model prediction">
        <sequence resource="EMBL-CDS" id="BAT12096"/>
    </conflict>
</comment>
<sequence length="334" mass="37871">MEERYEALKELGAGNFGVARLVRDKRSKELVAVKYIERGKKIDENVQREIINHRSLRHPNIIRFKEVCLTPTHLAIVMEYAAGGELFEQICTAGRFSEDEARYFFQQLISGVSYCHSLEICHRDLKLENTLLDGSPTPRVKICDFGYSKSALLHSKPKSTVGTPAYIAPEVLSRKEYDGKVADVWSCGVTLYVMLVGSYPFEDPGDPRNFRKTISRILGVQYSIPDYVRVSSDCRRLLSQIFVADPSKRITIPEIKKHTWFLKNLPKEISEREKADYKDTDAAPPTQAVEEIMRIIQEAKVPGDMAAADPALLAELAELKSDDEEEAADEYDTY</sequence>
<reference key="1">
    <citation type="journal article" date="1998" name="Gene">
        <title>Molecular analysis of a novel protein kinase in maturing rice seed.</title>
        <authorList>
            <person name="Hotta H."/>
            <person name="Aoki N."/>
            <person name="Matsuda T."/>
            <person name="Adachi T."/>
        </authorList>
    </citation>
    <scope>NUCLEOTIDE SEQUENCE [MRNA]</scope>
    <scope>TISSUE SPECIFICITY</scope>
    <scope>AUTOPHOSPHORYLATION</scope>
    <source>
        <strain>cv. Nipponbare</strain>
        <tissue>Endosperm</tissue>
        <tissue>Seed</tissue>
    </source>
</reference>
<reference key="2">
    <citation type="journal article" date="2004" name="Plant Cell">
        <title>Differential activation of the rice sucrose nonfermenting1-related protein kinase2 family by hyperosmotic stress and abscisic acid.</title>
        <authorList>
            <person name="Kobayashi Y."/>
            <person name="Yamamoto S."/>
            <person name="Minami H."/>
            <person name="Kagaya Y."/>
            <person name="Hattori T."/>
        </authorList>
    </citation>
    <scope>NUCLEOTIDE SEQUENCE [MRNA]</scope>
    <scope>TISSUE SPECIFICITY</scope>
    <scope>INDUCTION</scope>
    <scope>NOMENCLATURE</scope>
    <source>
        <strain>cv. Nipponbare</strain>
    </source>
</reference>
<reference key="3">
    <citation type="journal article" date="2013" name="Plant Mol. Biol. Rep.">
        <title>Genome-wide phylogenetic analysis of stress-activated protein kinase genes in rice (OsSAPKs) and expression profiling in response to Xanthomonas oryzae pv. oryzicola infection.</title>
        <authorList>
            <person name="Xu M.-R."/>
            <person name="Huang L.-Y."/>
            <person name="Zhang F."/>
            <person name="Zhu L.-H."/>
            <person name="Zhou Y.-L."/>
            <person name="Li Z.-K."/>
        </authorList>
    </citation>
    <scope>NUCLEOTIDE SEQUENCE [MRNA]</scope>
    <scope>INDUCTION BY XANTHOMONAS ORYZAE</scope>
    <scope>SUBCELLULAR LOCATION</scope>
</reference>
<reference key="4">
    <citation type="journal article" date="2003" name="Science">
        <title>In-depth view of structure, activity, and evolution of rice chromosome 10.</title>
        <authorList>
            <person name="Yu Y."/>
            <person name="Rambo T."/>
            <person name="Currie J."/>
            <person name="Saski C."/>
            <person name="Kim H.-R."/>
            <person name="Collura K."/>
            <person name="Thompson S."/>
            <person name="Simmons J."/>
            <person name="Yang T.-J."/>
            <person name="Nah G."/>
            <person name="Patel A.J."/>
            <person name="Thurmond S."/>
            <person name="Henry D."/>
            <person name="Oates R."/>
            <person name="Palmer M."/>
            <person name="Pries G."/>
            <person name="Gibson J."/>
            <person name="Anderson H."/>
            <person name="Paradkar M."/>
            <person name="Crane L."/>
            <person name="Dale J."/>
            <person name="Carver M.B."/>
            <person name="Wood T."/>
            <person name="Frisch D."/>
            <person name="Engler F."/>
            <person name="Soderlund C."/>
            <person name="Palmer L.E."/>
            <person name="Teytelman L."/>
            <person name="Nascimento L."/>
            <person name="De la Bastide M."/>
            <person name="Spiegel L."/>
            <person name="Ware D."/>
            <person name="O'Shaughnessy A."/>
            <person name="Dike S."/>
            <person name="Dedhia N."/>
            <person name="Preston R."/>
            <person name="Huang E."/>
            <person name="Ferraro K."/>
            <person name="Kuit K."/>
            <person name="Miller B."/>
            <person name="Zutavern T."/>
            <person name="Katzenberger F."/>
            <person name="Muller S."/>
            <person name="Balija V."/>
            <person name="Martienssen R.A."/>
            <person name="Stein L."/>
            <person name="Minx P."/>
            <person name="Johnson D."/>
            <person name="Cordum H."/>
            <person name="Mardis E."/>
            <person name="Cheng Z."/>
            <person name="Jiang J."/>
            <person name="Wilson R."/>
            <person name="McCombie W.R."/>
            <person name="Wing R.A."/>
            <person name="Yuan Q."/>
            <person name="Ouyang S."/>
            <person name="Liu J."/>
            <person name="Jones K.M."/>
            <person name="Gansberger K."/>
            <person name="Moffat K."/>
            <person name="Hill J."/>
            <person name="Tsitrin T."/>
            <person name="Overton L."/>
            <person name="Bera J."/>
            <person name="Kim M."/>
            <person name="Jin S."/>
            <person name="Tallon L."/>
            <person name="Ciecko A."/>
            <person name="Pai G."/>
            <person name="Van Aken S."/>
            <person name="Utterback T."/>
            <person name="Reidmuller S."/>
            <person name="Bormann J."/>
            <person name="Feldblyum T."/>
            <person name="Hsiao J."/>
            <person name="Zismann V."/>
            <person name="Blunt S."/>
            <person name="de Vazeille A.R."/>
            <person name="Shaffer T."/>
            <person name="Koo H."/>
            <person name="Suh B."/>
            <person name="Yang Q."/>
            <person name="Haas B."/>
            <person name="Peterson J."/>
            <person name="Pertea M."/>
            <person name="Volfovsky N."/>
            <person name="Wortman J."/>
            <person name="White O."/>
            <person name="Salzberg S.L."/>
            <person name="Fraser C.M."/>
            <person name="Buell C.R."/>
            <person name="Messing J."/>
            <person name="Song R."/>
            <person name="Fuks G."/>
            <person name="Llaca V."/>
            <person name="Kovchak S."/>
            <person name="Young S."/>
            <person name="Bowers J.E."/>
            <person name="Paterson A.H."/>
            <person name="Johns M.A."/>
            <person name="Mao L."/>
            <person name="Pan H."/>
            <person name="Dean R.A."/>
        </authorList>
    </citation>
    <scope>NUCLEOTIDE SEQUENCE [LARGE SCALE GENOMIC DNA]</scope>
    <source>
        <strain>cv. Nipponbare</strain>
    </source>
</reference>
<reference key="5">
    <citation type="journal article" date="2005" name="Nature">
        <title>The map-based sequence of the rice genome.</title>
        <authorList>
            <consortium name="International rice genome sequencing project (IRGSP)"/>
        </authorList>
    </citation>
    <scope>NUCLEOTIDE SEQUENCE [LARGE SCALE GENOMIC DNA]</scope>
    <source>
        <strain>cv. Nipponbare</strain>
    </source>
</reference>
<reference key="6">
    <citation type="journal article" date="2008" name="Nucleic Acids Res.">
        <title>The rice annotation project database (RAP-DB): 2008 update.</title>
        <authorList>
            <consortium name="The rice annotation project (RAP)"/>
        </authorList>
    </citation>
    <scope>GENOME REANNOTATION</scope>
    <source>
        <strain>cv. Nipponbare</strain>
    </source>
</reference>
<reference key="7">
    <citation type="journal article" date="2013" name="Rice">
        <title>Improvement of the Oryza sativa Nipponbare reference genome using next generation sequence and optical map data.</title>
        <authorList>
            <person name="Kawahara Y."/>
            <person name="de la Bastide M."/>
            <person name="Hamilton J.P."/>
            <person name="Kanamori H."/>
            <person name="McCombie W.R."/>
            <person name="Ouyang S."/>
            <person name="Schwartz D.C."/>
            <person name="Tanaka T."/>
            <person name="Wu J."/>
            <person name="Zhou S."/>
            <person name="Childs K.L."/>
            <person name="Davidson R.M."/>
            <person name="Lin H."/>
            <person name="Quesada-Ocampo L."/>
            <person name="Vaillancourt B."/>
            <person name="Sakai H."/>
            <person name="Lee S.S."/>
            <person name="Kim J."/>
            <person name="Numa H."/>
            <person name="Itoh T."/>
            <person name="Buell C.R."/>
            <person name="Matsumoto T."/>
        </authorList>
    </citation>
    <scope>GENOME REANNOTATION</scope>
    <source>
        <strain>cv. Nipponbare</strain>
    </source>
</reference>
<reference key="8">
    <citation type="journal article" date="2005" name="PLoS Biol.">
        <title>The genomes of Oryza sativa: a history of duplications.</title>
        <authorList>
            <person name="Yu J."/>
            <person name="Wang J."/>
            <person name="Lin W."/>
            <person name="Li S."/>
            <person name="Li H."/>
            <person name="Zhou J."/>
            <person name="Ni P."/>
            <person name="Dong W."/>
            <person name="Hu S."/>
            <person name="Zeng C."/>
            <person name="Zhang J."/>
            <person name="Zhang Y."/>
            <person name="Li R."/>
            <person name="Xu Z."/>
            <person name="Li S."/>
            <person name="Li X."/>
            <person name="Zheng H."/>
            <person name="Cong L."/>
            <person name="Lin L."/>
            <person name="Yin J."/>
            <person name="Geng J."/>
            <person name="Li G."/>
            <person name="Shi J."/>
            <person name="Liu J."/>
            <person name="Lv H."/>
            <person name="Li J."/>
            <person name="Wang J."/>
            <person name="Deng Y."/>
            <person name="Ran L."/>
            <person name="Shi X."/>
            <person name="Wang X."/>
            <person name="Wu Q."/>
            <person name="Li C."/>
            <person name="Ren X."/>
            <person name="Wang J."/>
            <person name="Wang X."/>
            <person name="Li D."/>
            <person name="Liu D."/>
            <person name="Zhang X."/>
            <person name="Ji Z."/>
            <person name="Zhao W."/>
            <person name="Sun Y."/>
            <person name="Zhang Z."/>
            <person name="Bao J."/>
            <person name="Han Y."/>
            <person name="Dong L."/>
            <person name="Ji J."/>
            <person name="Chen P."/>
            <person name="Wu S."/>
            <person name="Liu J."/>
            <person name="Xiao Y."/>
            <person name="Bu D."/>
            <person name="Tan J."/>
            <person name="Yang L."/>
            <person name="Ye C."/>
            <person name="Zhang J."/>
            <person name="Xu J."/>
            <person name="Zhou Y."/>
            <person name="Yu Y."/>
            <person name="Zhang B."/>
            <person name="Zhuang S."/>
            <person name="Wei H."/>
            <person name="Liu B."/>
            <person name="Lei M."/>
            <person name="Yu H."/>
            <person name="Li Y."/>
            <person name="Xu H."/>
            <person name="Wei S."/>
            <person name="He X."/>
            <person name="Fang L."/>
            <person name="Zhang Z."/>
            <person name="Zhang Y."/>
            <person name="Huang X."/>
            <person name="Su Z."/>
            <person name="Tong W."/>
            <person name="Li J."/>
            <person name="Tong Z."/>
            <person name="Li S."/>
            <person name="Ye J."/>
            <person name="Wang L."/>
            <person name="Fang L."/>
            <person name="Lei T."/>
            <person name="Chen C.-S."/>
            <person name="Chen H.-C."/>
            <person name="Xu Z."/>
            <person name="Li H."/>
            <person name="Huang H."/>
            <person name="Zhang F."/>
            <person name="Xu H."/>
            <person name="Li N."/>
            <person name="Zhao C."/>
            <person name="Li S."/>
            <person name="Dong L."/>
            <person name="Huang Y."/>
            <person name="Li L."/>
            <person name="Xi Y."/>
            <person name="Qi Q."/>
            <person name="Li W."/>
            <person name="Zhang B."/>
            <person name="Hu W."/>
            <person name="Zhang Y."/>
            <person name="Tian X."/>
            <person name="Jiao Y."/>
            <person name="Liang X."/>
            <person name="Jin J."/>
            <person name="Gao L."/>
            <person name="Zheng W."/>
            <person name="Hao B."/>
            <person name="Liu S.-M."/>
            <person name="Wang W."/>
            <person name="Yuan L."/>
            <person name="Cao M."/>
            <person name="McDermott J."/>
            <person name="Samudrala R."/>
            <person name="Wang J."/>
            <person name="Wong G.K.-S."/>
            <person name="Yang H."/>
        </authorList>
    </citation>
    <scope>NUCLEOTIDE SEQUENCE [LARGE SCALE GENOMIC DNA]</scope>
    <source>
        <strain>cv. Nipponbare</strain>
    </source>
</reference>
<dbReference type="EC" id="2.7.11.1"/>
<dbReference type="EMBL" id="D88399">
    <property type="protein sequence ID" value="BAA13608.1"/>
    <property type="molecule type" value="mRNA"/>
</dbReference>
<dbReference type="EMBL" id="AB125304">
    <property type="protein sequence ID" value="BAD17999.1"/>
    <property type="molecule type" value="mRNA"/>
</dbReference>
<dbReference type="EMBL" id="JF733761">
    <property type="protein sequence ID" value="AEF00932.1"/>
    <property type="molecule type" value="mRNA"/>
</dbReference>
<dbReference type="EMBL" id="AC084763">
    <property type="protein sequence ID" value="AAG60195.1"/>
    <property type="molecule type" value="Genomic_DNA"/>
</dbReference>
<dbReference type="EMBL" id="DP000086">
    <property type="protein sequence ID" value="AAP55046.1"/>
    <property type="molecule type" value="Genomic_DNA"/>
</dbReference>
<dbReference type="EMBL" id="AP008216">
    <property type="protein sequence ID" value="BAF27249.1"/>
    <property type="status" value="ALT_SEQ"/>
    <property type="molecule type" value="Genomic_DNA"/>
</dbReference>
<dbReference type="EMBL" id="AP014966">
    <property type="protein sequence ID" value="BAT12096.1"/>
    <property type="status" value="ALT_SEQ"/>
    <property type="molecule type" value="Genomic_DNA"/>
</dbReference>
<dbReference type="EMBL" id="CM000147">
    <property type="protein sequence ID" value="EEE51411.1"/>
    <property type="molecule type" value="Genomic_DNA"/>
</dbReference>
<dbReference type="PIR" id="T03692">
    <property type="entry name" value="T03692"/>
</dbReference>
<dbReference type="RefSeq" id="XP_015614267.1">
    <property type="nucleotide sequence ID" value="XM_015758781.1"/>
</dbReference>
<dbReference type="SMR" id="P0C5D6"/>
<dbReference type="FunCoup" id="P0C5D6">
    <property type="interactions" value="529"/>
</dbReference>
<dbReference type="STRING" id="39947.P0C5D6"/>
<dbReference type="PaxDb" id="39947-P0C5D6"/>
<dbReference type="KEGG" id="dosa:Os10g0564500"/>
<dbReference type="eggNOG" id="KOG0583">
    <property type="taxonomic scope" value="Eukaryota"/>
</dbReference>
<dbReference type="InParanoid" id="P0C5D6"/>
<dbReference type="OrthoDB" id="193931at2759"/>
<dbReference type="Proteomes" id="UP000000763">
    <property type="component" value="Chromosome 10"/>
</dbReference>
<dbReference type="Proteomes" id="UP000007752">
    <property type="component" value="Chromosome 10"/>
</dbReference>
<dbReference type="Proteomes" id="UP000059680">
    <property type="component" value="Chromosome 10"/>
</dbReference>
<dbReference type="GO" id="GO:0005737">
    <property type="term" value="C:cytoplasm"/>
    <property type="evidence" value="ECO:0007669"/>
    <property type="project" value="UniProtKB-SubCell"/>
</dbReference>
<dbReference type="GO" id="GO:0005634">
    <property type="term" value="C:nucleus"/>
    <property type="evidence" value="ECO:0007669"/>
    <property type="project" value="UniProtKB-SubCell"/>
</dbReference>
<dbReference type="GO" id="GO:0005524">
    <property type="term" value="F:ATP binding"/>
    <property type="evidence" value="ECO:0007669"/>
    <property type="project" value="UniProtKB-KW"/>
</dbReference>
<dbReference type="GO" id="GO:0106310">
    <property type="term" value="F:protein serine kinase activity"/>
    <property type="evidence" value="ECO:0007669"/>
    <property type="project" value="RHEA"/>
</dbReference>
<dbReference type="GO" id="GO:0004674">
    <property type="term" value="F:protein serine/threonine kinase activity"/>
    <property type="evidence" value="ECO:0000318"/>
    <property type="project" value="GO_Central"/>
</dbReference>
<dbReference type="GO" id="GO:0009738">
    <property type="term" value="P:abscisic acid-activated signaling pathway"/>
    <property type="evidence" value="ECO:0007669"/>
    <property type="project" value="UniProtKB-KW"/>
</dbReference>
<dbReference type="CDD" id="cd14662">
    <property type="entry name" value="STKc_SnRK2"/>
    <property type="match status" value="1"/>
</dbReference>
<dbReference type="FunFam" id="1.10.510.10:FF:000085">
    <property type="entry name" value="Serine/threonine-protein kinase SRK2E"/>
    <property type="match status" value="1"/>
</dbReference>
<dbReference type="FunFam" id="3.30.200.20:FF:000045">
    <property type="entry name" value="Serine/threonine-protein kinase SRK2E"/>
    <property type="match status" value="1"/>
</dbReference>
<dbReference type="Gene3D" id="3.30.200.20">
    <property type="entry name" value="Phosphorylase Kinase, domain 1"/>
    <property type="match status" value="1"/>
</dbReference>
<dbReference type="Gene3D" id="1.10.510.10">
    <property type="entry name" value="Transferase(Phosphotransferase) domain 1"/>
    <property type="match status" value="1"/>
</dbReference>
<dbReference type="InterPro" id="IPR011009">
    <property type="entry name" value="Kinase-like_dom_sf"/>
</dbReference>
<dbReference type="InterPro" id="IPR000719">
    <property type="entry name" value="Prot_kinase_dom"/>
</dbReference>
<dbReference type="InterPro" id="IPR017441">
    <property type="entry name" value="Protein_kinase_ATP_BS"/>
</dbReference>
<dbReference type="InterPro" id="IPR008271">
    <property type="entry name" value="Ser/Thr_kinase_AS"/>
</dbReference>
<dbReference type="PANTHER" id="PTHR24343:SF558">
    <property type="entry name" value="PROTEIN KINASE DOMAIN-CONTAINING PROTEIN"/>
    <property type="match status" value="1"/>
</dbReference>
<dbReference type="PANTHER" id="PTHR24343">
    <property type="entry name" value="SERINE/THREONINE KINASE"/>
    <property type="match status" value="1"/>
</dbReference>
<dbReference type="Pfam" id="PF00069">
    <property type="entry name" value="Pkinase"/>
    <property type="match status" value="1"/>
</dbReference>
<dbReference type="SMART" id="SM00220">
    <property type="entry name" value="S_TKc"/>
    <property type="match status" value="1"/>
</dbReference>
<dbReference type="SUPFAM" id="SSF56112">
    <property type="entry name" value="Protein kinase-like (PK-like)"/>
    <property type="match status" value="1"/>
</dbReference>
<dbReference type="PROSITE" id="PS00107">
    <property type="entry name" value="PROTEIN_KINASE_ATP"/>
    <property type="match status" value="1"/>
</dbReference>
<dbReference type="PROSITE" id="PS50011">
    <property type="entry name" value="PROTEIN_KINASE_DOM"/>
    <property type="match status" value="1"/>
</dbReference>
<dbReference type="PROSITE" id="PS00108">
    <property type="entry name" value="PROTEIN_KINASE_ST"/>
    <property type="match status" value="1"/>
</dbReference>
<protein>
    <recommendedName>
        <fullName>Serine/threonine-protein kinase SAPK3</fullName>
        <ecNumber>2.7.11.1</ecNumber>
    </recommendedName>
    <alternativeName>
        <fullName>Osmotic stress/abscisic acid-activated protein kinase 3</fullName>
    </alternativeName>
    <alternativeName>
        <fullName>Protein kinase REK</fullName>
    </alternativeName>
    <alternativeName>
        <fullName evidence="7">stress-activated protein kinase 3</fullName>
        <shortName evidence="7">OsSAPK3</shortName>
    </alternativeName>
</protein>
<organism>
    <name type="scientific">Oryza sativa subsp. japonica</name>
    <name type="common">Rice</name>
    <dbReference type="NCBI Taxonomy" id="39947"/>
    <lineage>
        <taxon>Eukaryota</taxon>
        <taxon>Viridiplantae</taxon>
        <taxon>Streptophyta</taxon>
        <taxon>Embryophyta</taxon>
        <taxon>Tracheophyta</taxon>
        <taxon>Spermatophyta</taxon>
        <taxon>Magnoliopsida</taxon>
        <taxon>Liliopsida</taxon>
        <taxon>Poales</taxon>
        <taxon>Poaceae</taxon>
        <taxon>BOP clade</taxon>
        <taxon>Oryzoideae</taxon>
        <taxon>Oryzeae</taxon>
        <taxon>Oryzinae</taxon>
        <taxon>Oryza</taxon>
        <taxon>Oryza sativa</taxon>
    </lineage>
</organism>
<name>SAPK3_ORYSJ</name>
<keyword id="KW-0938">Abscisic acid signaling pathway</keyword>
<keyword id="KW-0067">ATP-binding</keyword>
<keyword id="KW-0963">Cytoplasm</keyword>
<keyword id="KW-0418">Kinase</keyword>
<keyword id="KW-0547">Nucleotide-binding</keyword>
<keyword id="KW-0539">Nucleus</keyword>
<keyword id="KW-0597">Phosphoprotein</keyword>
<keyword id="KW-1185">Reference proteome</keyword>
<keyword id="KW-0723">Serine/threonine-protein kinase</keyword>
<keyword id="KW-0808">Transferase</keyword>
<feature type="chain" id="PRO_0000086630" description="Serine/threonine-protein kinase SAPK3">
    <location>
        <begin position="1"/>
        <end position="334"/>
    </location>
</feature>
<feature type="domain" description="Protein kinase" evidence="2">
    <location>
        <begin position="5"/>
        <end position="261"/>
    </location>
</feature>
<feature type="active site" description="Proton acceptor" evidence="2 3">
    <location>
        <position position="124"/>
    </location>
</feature>
<feature type="binding site" evidence="2">
    <location>
        <begin position="11"/>
        <end position="19"/>
    </location>
    <ligand>
        <name>ATP</name>
        <dbReference type="ChEBI" id="CHEBI:30616"/>
    </ligand>
</feature>
<feature type="binding site" evidence="2">
    <location>
        <position position="34"/>
    </location>
    <ligand>
        <name>ATP</name>
        <dbReference type="ChEBI" id="CHEBI:30616"/>
    </ligand>
</feature>
<feature type="sequence conflict" description="In Ref. 2; BAD17999 and 3; AEF00932." evidence="8" ref="2 3">
    <original>K</original>
    <variation>E</variation>
    <location>
        <position position="175"/>
    </location>
</feature>
<feature type="sequence conflict" description="In Ref. 1; BAA13608." evidence="8" ref="1">
    <original>P</original>
    <variation>L</variation>
    <location>
        <position position="207"/>
    </location>
</feature>
<feature type="sequence conflict" description="In Ref. 1; BAA13608." evidence="8" ref="1">
    <original>A</original>
    <variation>G</variation>
    <location>
        <position position="299"/>
    </location>
</feature>